<comment type="subcellular location">
    <subcellularLocation>
        <location evidence="2">Membrane</location>
        <topology evidence="2">Multi-pass membrane protein</topology>
    </subcellularLocation>
</comment>
<comment type="similarity">
    <text evidence="2">Belongs to the unc-93 family.</text>
</comment>
<comment type="caution">
    <text evidence="2">Despite its name it is related to the unc-93 family and not to the major facilitator superfamily.</text>
</comment>
<evidence type="ECO:0000255" key="1"/>
<evidence type="ECO:0000305" key="2"/>
<feature type="chain" id="PRO_0000305023" description="UNC93-like protein MFSD11">
    <location>
        <begin position="1"/>
        <end position="445"/>
    </location>
</feature>
<feature type="transmembrane region" description="Helical" evidence="1">
    <location>
        <begin position="8"/>
        <end position="28"/>
    </location>
</feature>
<feature type="transmembrane region" description="Helical" evidence="1">
    <location>
        <begin position="52"/>
        <end position="72"/>
    </location>
</feature>
<feature type="transmembrane region" description="Helical" evidence="1">
    <location>
        <begin position="74"/>
        <end position="94"/>
    </location>
</feature>
<feature type="transmembrane region" description="Helical" evidence="1">
    <location>
        <begin position="98"/>
        <end position="118"/>
    </location>
</feature>
<feature type="transmembrane region" description="Helical" evidence="1">
    <location>
        <begin position="138"/>
        <end position="158"/>
    </location>
</feature>
<feature type="transmembrane region" description="Helical" evidence="1">
    <location>
        <begin position="170"/>
        <end position="190"/>
    </location>
</feature>
<feature type="transmembrane region" description="Helical" evidence="1">
    <location>
        <begin position="239"/>
        <end position="259"/>
    </location>
</feature>
<feature type="transmembrane region" description="Helical" evidence="1">
    <location>
        <begin position="277"/>
        <end position="297"/>
    </location>
</feature>
<feature type="transmembrane region" description="Helical" evidence="1">
    <location>
        <begin position="309"/>
        <end position="329"/>
    </location>
</feature>
<feature type="transmembrane region" description="Helical" evidence="1">
    <location>
        <begin position="343"/>
        <end position="363"/>
    </location>
</feature>
<feature type="transmembrane region" description="Helical" evidence="1">
    <location>
        <begin position="385"/>
        <end position="405"/>
    </location>
</feature>
<feature type="transmembrane region" description="Helical" evidence="1">
    <location>
        <begin position="415"/>
        <end position="435"/>
    </location>
</feature>
<feature type="glycosylation site" description="N-linked (GlcNAc...) asparagine" evidence="1">
    <location>
        <position position="40"/>
    </location>
</feature>
<feature type="glycosylation site" description="N-linked (GlcNAc...) asparagine" evidence="1">
    <location>
        <position position="163"/>
    </location>
</feature>
<organism>
    <name type="scientific">Xenopus laevis</name>
    <name type="common">African clawed frog</name>
    <dbReference type="NCBI Taxonomy" id="8355"/>
    <lineage>
        <taxon>Eukaryota</taxon>
        <taxon>Metazoa</taxon>
        <taxon>Chordata</taxon>
        <taxon>Craniata</taxon>
        <taxon>Vertebrata</taxon>
        <taxon>Euteleostomi</taxon>
        <taxon>Amphibia</taxon>
        <taxon>Batrachia</taxon>
        <taxon>Anura</taxon>
        <taxon>Pipoidea</taxon>
        <taxon>Pipidae</taxon>
        <taxon>Xenopodinae</taxon>
        <taxon>Xenopus</taxon>
        <taxon>Xenopus</taxon>
    </lineage>
</organism>
<accession>Q6PB15</accession>
<protein>
    <recommendedName>
        <fullName>UNC93-like protein MFSD11</fullName>
    </recommendedName>
    <alternativeName>
        <fullName>Major facilitator superfamily domain-containing protein 11</fullName>
    </alternativeName>
</protein>
<sequence length="445" mass="48313">MSPESRKLLNIVILGVGFMFMFTAFQTSGNVAQTVISSLNSTSFHGSGYTSLAIIYSVFSASNLIAPSVIAVLGCQMSMFLSGLLYSAYIAMFIQPYTWSFYTLSVLIGIAAAVLWTAQGCCLTINSDERTIGRHSGIFWALLQFSMLFGNLYIYLAWKGEINISDTDRRTVFIALTVISLVGSVLFFLIRTPDSDSAQEDEASDSVADAEGSMSAQGCLSKAMDAFRKSLKLSITKEMLLLSILVAYTGLELTFYSGVYGTCIGSMNVFGTDAKSLIGLSGIFVGLGEVLGGGLFGLLGKNNYFGRNPVVILGVVVHFLAFYMIYLYMPSDAPIASRSGTDLSAFINPSKTLALACSFLLGLGDSCYNTQMLSILGSLYPDNSAPAFAVFKFVQSVSAAVAFFYSNYLLLHWQLLILVIFGFFGTISFFFVEWGLTQRSLYNSM</sequence>
<gene>
    <name type="primary">mfsd11</name>
</gene>
<dbReference type="EMBL" id="BC059969">
    <property type="protein sequence ID" value="AAH59969.1"/>
    <property type="molecule type" value="mRNA"/>
</dbReference>
<dbReference type="RefSeq" id="NP_001083235.1">
    <property type="nucleotide sequence ID" value="NM_001089766.1"/>
</dbReference>
<dbReference type="SMR" id="Q6PB15"/>
<dbReference type="GlyCosmos" id="Q6PB15">
    <property type="glycosylation" value="2 sites, No reported glycans"/>
</dbReference>
<dbReference type="DNASU" id="398817"/>
<dbReference type="GeneID" id="398817"/>
<dbReference type="KEGG" id="xla:398817"/>
<dbReference type="AGR" id="Xenbase:XB-GENE-6255166"/>
<dbReference type="CTD" id="398817"/>
<dbReference type="Xenbase" id="XB-GENE-6255166">
    <property type="gene designation" value="mfsd11.S"/>
</dbReference>
<dbReference type="OMA" id="HECCLIG"/>
<dbReference type="OrthoDB" id="196103at2759"/>
<dbReference type="Proteomes" id="UP000186698">
    <property type="component" value="Chromosome 9_10S"/>
</dbReference>
<dbReference type="Bgee" id="398817">
    <property type="expression patterns" value="Expressed in blastula and 19 other cell types or tissues"/>
</dbReference>
<dbReference type="GO" id="GO:0016020">
    <property type="term" value="C:membrane"/>
    <property type="evidence" value="ECO:0007669"/>
    <property type="project" value="UniProtKB-SubCell"/>
</dbReference>
<dbReference type="CDD" id="cd17407">
    <property type="entry name" value="MFS_MFSD11"/>
    <property type="match status" value="1"/>
</dbReference>
<dbReference type="Gene3D" id="1.20.1250.20">
    <property type="entry name" value="MFS general substrate transporter like domains"/>
    <property type="match status" value="2"/>
</dbReference>
<dbReference type="InterPro" id="IPR010291">
    <property type="entry name" value="Ion_channel_UNC-93"/>
</dbReference>
<dbReference type="InterPro" id="IPR036259">
    <property type="entry name" value="MFS_trans_sf"/>
</dbReference>
<dbReference type="InterPro" id="IPR051617">
    <property type="entry name" value="UNC-93-like_regulator"/>
</dbReference>
<dbReference type="PANTHER" id="PTHR23294">
    <property type="entry name" value="ET TRANSLATION PRODUCT-RELATED"/>
    <property type="match status" value="1"/>
</dbReference>
<dbReference type="PANTHER" id="PTHR23294:SF0">
    <property type="entry name" value="UNC93-LIKE PROTEIN MFSD11"/>
    <property type="match status" value="1"/>
</dbReference>
<dbReference type="Pfam" id="PF05978">
    <property type="entry name" value="UNC-93"/>
    <property type="match status" value="1"/>
</dbReference>
<dbReference type="SUPFAM" id="SSF103473">
    <property type="entry name" value="MFS general substrate transporter"/>
    <property type="match status" value="1"/>
</dbReference>
<name>MFS11_XENLA</name>
<keyword id="KW-0325">Glycoprotein</keyword>
<keyword id="KW-0472">Membrane</keyword>
<keyword id="KW-1185">Reference proteome</keyword>
<keyword id="KW-0812">Transmembrane</keyword>
<keyword id="KW-1133">Transmembrane helix</keyword>
<proteinExistence type="evidence at transcript level"/>
<reference key="1">
    <citation type="submission" date="2003-10" db="EMBL/GenBank/DDBJ databases">
        <authorList>
            <consortium name="NIH - Xenopus Gene Collection (XGC) project"/>
        </authorList>
    </citation>
    <scope>NUCLEOTIDE SEQUENCE [LARGE SCALE MRNA]</scope>
    <source>
        <tissue>Kidney</tissue>
    </source>
</reference>